<gene>
    <name type="ORF">F22D3.4</name>
</gene>
<dbReference type="EMBL" id="FO080140">
    <property type="protein sequence ID" value="CCD61553.1"/>
    <property type="molecule type" value="Genomic_DNA"/>
</dbReference>
<dbReference type="PIR" id="T15295">
    <property type="entry name" value="T15295"/>
</dbReference>
<dbReference type="PIR" id="T16131">
    <property type="entry name" value="T16131"/>
</dbReference>
<dbReference type="RefSeq" id="NP_495421.2">
    <property type="nucleotide sequence ID" value="NM_063020.4"/>
</dbReference>
<dbReference type="FunCoup" id="Q10919">
    <property type="interactions" value="346"/>
</dbReference>
<dbReference type="STRING" id="6239.F22D3.4.1"/>
<dbReference type="PaxDb" id="6239-F22D3.4"/>
<dbReference type="EnsemblMetazoa" id="F22D3.4.1">
    <property type="protein sequence ID" value="F22D3.4.1"/>
    <property type="gene ID" value="WBGene00017700"/>
</dbReference>
<dbReference type="GeneID" id="184825"/>
<dbReference type="KEGG" id="cel:CELE_F22D3.4"/>
<dbReference type="UCSC" id="F22D3.4">
    <property type="organism name" value="c. elegans"/>
</dbReference>
<dbReference type="AGR" id="WB:WBGene00017700"/>
<dbReference type="CTD" id="184825"/>
<dbReference type="WormBase" id="F22D3.4">
    <property type="protein sequence ID" value="CE39354"/>
    <property type="gene ID" value="WBGene00017700"/>
</dbReference>
<dbReference type="eggNOG" id="ENOG502SEKW">
    <property type="taxonomic scope" value="Eukaryota"/>
</dbReference>
<dbReference type="GeneTree" id="ENSGT00970000197766"/>
<dbReference type="HOGENOM" id="CLU_051247_0_0_1"/>
<dbReference type="InParanoid" id="Q10919"/>
<dbReference type="OMA" id="GNPKGWA"/>
<dbReference type="OrthoDB" id="5796157at2759"/>
<dbReference type="PRO" id="PR:Q10919"/>
<dbReference type="Proteomes" id="UP000001940">
    <property type="component" value="Chromosome II"/>
</dbReference>
<dbReference type="Bgee" id="WBGene00017700">
    <property type="expression patterns" value="Expressed in adult organism and 1 other cell type or tissue"/>
</dbReference>
<protein>
    <recommendedName>
        <fullName>Uncharacterized protein F22D3.4</fullName>
    </recommendedName>
</protein>
<accession>Q10919</accession>
<accession>Q19715</accession>
<proteinExistence type="predicted"/>
<organism>
    <name type="scientific">Caenorhabditis elegans</name>
    <dbReference type="NCBI Taxonomy" id="6239"/>
    <lineage>
        <taxon>Eukaryota</taxon>
        <taxon>Metazoa</taxon>
        <taxon>Ecdysozoa</taxon>
        <taxon>Nematoda</taxon>
        <taxon>Chromadorea</taxon>
        <taxon>Rhabditida</taxon>
        <taxon>Rhabditina</taxon>
        <taxon>Rhabditomorpha</taxon>
        <taxon>Rhabditoidea</taxon>
        <taxon>Rhabditidae</taxon>
        <taxon>Peloderinae</taxon>
        <taxon>Caenorhabditis</taxon>
    </lineage>
</organism>
<reference key="1">
    <citation type="journal article" date="1998" name="Science">
        <title>Genome sequence of the nematode C. elegans: a platform for investigating biology.</title>
        <authorList>
            <consortium name="The C. elegans sequencing consortium"/>
        </authorList>
    </citation>
    <scope>NUCLEOTIDE SEQUENCE [LARGE SCALE GENOMIC DNA]</scope>
    <source>
        <strain>Bristol N2</strain>
    </source>
</reference>
<name>YUK4_CAEEL</name>
<keyword id="KW-1185">Reference proteome</keyword>
<sequence>MNLYLLVLSSTFLCLAAEEIYKTNGNTTISENSNILNVLPSNDIWKTGSITHDKKDYLEALFSKSYYKRECEHETRLEPVYFYPGENVKIKCYMCNLALVFNGNPKGWARVKNIENFLEKGEKFGSKDGPEAEMVENSDIVEDQNAQSSARSLGKPYYYEEDGFLVIENANVYSQGVYFCFDEDSVASQRFFYILIPILPVFHIDSKNNSKIMELTNNCSDSVRKFPNHYWMNSNEKVPFDDQDTCFARNGMDDWKCYDFEKIKRFEKCENPATSCVKKFVHPTLPNDIPISINLQWSPWSECNDRTQTRTGQCFIRLERQLDDSDGLPENWSWLRKLNTMEKHLAFRDGVPLFNGLLASWLYEVESLESCLDTELGPKSKLSGYDNFFGNVLTSLFSNKTISGIKMSDNAFKYCIRTKTLDETNDALIGTYTEDKRTC</sequence>
<feature type="chain" id="PRO_0000065053" description="Uncharacterized protein F22D3.4">
    <location>
        <begin position="1"/>
        <end position="439"/>
    </location>
</feature>